<keyword id="KW-0028">Amino-acid biosynthesis</keyword>
<keyword id="KW-0067">ATP-binding</keyword>
<keyword id="KW-0963">Cytoplasm</keyword>
<keyword id="KW-0418">Kinase</keyword>
<keyword id="KW-0547">Nucleotide-binding</keyword>
<keyword id="KW-0791">Threonine biosynthesis</keyword>
<keyword id="KW-0808">Transferase</keyword>
<evidence type="ECO:0000255" key="1">
    <source>
        <dbReference type="HAMAP-Rule" id="MF_00384"/>
    </source>
</evidence>
<proteinExistence type="inferred from homology"/>
<sequence>MVKVYAPASSANMSVGFDVLGAAVTPVDGALLGDVVTVESAETFSLNNLGRFADKLPSEPRENIVYQCWERFCQELGKQIPVAMTLEKNMPIGSGLGSSACSVVAALMAMNEHCGKPLNDTRLLALMGELEGRISGSIHYDNVAPCFLGGMQLMIEENDIISQQVPGFDEWLWVLAYPGIKVSTAEARAILPAQYRRQDCIAHGRHLAGFIHACYSRQPELAAKLMKDVIAEPYRERLLPGFRQARQAVAEIGAVASGISGSGPTLFALCDKPDTAQRVADWLGKNYLQNQEGFVHICRLDTAGARVLEN</sequence>
<protein>
    <recommendedName>
        <fullName evidence="1">Homoserine kinase</fullName>
        <shortName evidence="1">HK</shortName>
        <shortName evidence="1">HSK</shortName>
        <ecNumber evidence="1">2.7.1.39</ecNumber>
    </recommendedName>
</protein>
<gene>
    <name evidence="1" type="primary">thrB</name>
    <name type="ordered locus">ECH74115_0004</name>
</gene>
<feature type="chain" id="PRO_1000122417" description="Homoserine kinase">
    <location>
        <begin position="1"/>
        <end position="310"/>
    </location>
</feature>
<feature type="binding site" evidence="1">
    <location>
        <begin position="91"/>
        <end position="101"/>
    </location>
    <ligand>
        <name>ATP</name>
        <dbReference type="ChEBI" id="CHEBI:30616"/>
    </ligand>
</feature>
<name>KHSE_ECO5E</name>
<reference key="1">
    <citation type="journal article" date="2011" name="Proc. Natl. Acad. Sci. U.S.A.">
        <title>Genomic anatomy of Escherichia coli O157:H7 outbreaks.</title>
        <authorList>
            <person name="Eppinger M."/>
            <person name="Mammel M.K."/>
            <person name="Leclerc J.E."/>
            <person name="Ravel J."/>
            <person name="Cebula T.A."/>
        </authorList>
    </citation>
    <scope>NUCLEOTIDE SEQUENCE [LARGE SCALE GENOMIC DNA]</scope>
    <source>
        <strain>EC4115 / EHEC</strain>
    </source>
</reference>
<comment type="function">
    <text evidence="1">Catalyzes the ATP-dependent phosphorylation of L-homoserine to L-homoserine phosphate.</text>
</comment>
<comment type="catalytic activity">
    <reaction evidence="1">
        <text>L-homoserine + ATP = O-phospho-L-homoserine + ADP + H(+)</text>
        <dbReference type="Rhea" id="RHEA:13985"/>
        <dbReference type="ChEBI" id="CHEBI:15378"/>
        <dbReference type="ChEBI" id="CHEBI:30616"/>
        <dbReference type="ChEBI" id="CHEBI:57476"/>
        <dbReference type="ChEBI" id="CHEBI:57590"/>
        <dbReference type="ChEBI" id="CHEBI:456216"/>
        <dbReference type="EC" id="2.7.1.39"/>
    </reaction>
</comment>
<comment type="pathway">
    <text evidence="1">Amino-acid biosynthesis; L-threonine biosynthesis; L-threonine from L-aspartate: step 4/5.</text>
</comment>
<comment type="subcellular location">
    <subcellularLocation>
        <location evidence="1">Cytoplasm</location>
    </subcellularLocation>
</comment>
<comment type="similarity">
    <text evidence="1">Belongs to the GHMP kinase family. Homoserine kinase subfamily.</text>
</comment>
<accession>B5YY97</accession>
<dbReference type="EC" id="2.7.1.39" evidence="1"/>
<dbReference type="EMBL" id="CP001164">
    <property type="protein sequence ID" value="ACI34694.1"/>
    <property type="molecule type" value="Genomic_DNA"/>
</dbReference>
<dbReference type="RefSeq" id="WP_000241671.1">
    <property type="nucleotide sequence ID" value="NC_011353.1"/>
</dbReference>
<dbReference type="SMR" id="B5YY97"/>
<dbReference type="KEGG" id="ecf:ECH74115_0004"/>
<dbReference type="HOGENOM" id="CLU_041243_1_1_6"/>
<dbReference type="UniPathway" id="UPA00050">
    <property type="reaction ID" value="UER00064"/>
</dbReference>
<dbReference type="GO" id="GO:0005737">
    <property type="term" value="C:cytoplasm"/>
    <property type="evidence" value="ECO:0007669"/>
    <property type="project" value="UniProtKB-SubCell"/>
</dbReference>
<dbReference type="GO" id="GO:0005524">
    <property type="term" value="F:ATP binding"/>
    <property type="evidence" value="ECO:0007669"/>
    <property type="project" value="UniProtKB-UniRule"/>
</dbReference>
<dbReference type="GO" id="GO:0004413">
    <property type="term" value="F:homoserine kinase activity"/>
    <property type="evidence" value="ECO:0007669"/>
    <property type="project" value="UniProtKB-UniRule"/>
</dbReference>
<dbReference type="GO" id="GO:0009088">
    <property type="term" value="P:threonine biosynthetic process"/>
    <property type="evidence" value="ECO:0007669"/>
    <property type="project" value="UniProtKB-UniRule"/>
</dbReference>
<dbReference type="FunFam" id="3.30.230.10:FF:000020">
    <property type="entry name" value="Homoserine kinase"/>
    <property type="match status" value="1"/>
</dbReference>
<dbReference type="FunFam" id="3.30.70.890:FF:000002">
    <property type="entry name" value="Homoserine kinase"/>
    <property type="match status" value="1"/>
</dbReference>
<dbReference type="Gene3D" id="3.30.230.10">
    <property type="match status" value="1"/>
</dbReference>
<dbReference type="Gene3D" id="3.30.70.890">
    <property type="entry name" value="GHMP kinase, C-terminal domain"/>
    <property type="match status" value="1"/>
</dbReference>
<dbReference type="HAMAP" id="MF_00384">
    <property type="entry name" value="Homoser_kinase"/>
    <property type="match status" value="1"/>
</dbReference>
<dbReference type="InterPro" id="IPR013750">
    <property type="entry name" value="GHMP_kinase_C_dom"/>
</dbReference>
<dbReference type="InterPro" id="IPR036554">
    <property type="entry name" value="GHMP_kinase_C_sf"/>
</dbReference>
<dbReference type="InterPro" id="IPR006204">
    <property type="entry name" value="GHMP_kinase_N_dom"/>
</dbReference>
<dbReference type="InterPro" id="IPR006203">
    <property type="entry name" value="GHMP_knse_ATP-bd_CS"/>
</dbReference>
<dbReference type="InterPro" id="IPR000870">
    <property type="entry name" value="Homoserine_kinase"/>
</dbReference>
<dbReference type="InterPro" id="IPR020568">
    <property type="entry name" value="Ribosomal_Su5_D2-typ_SF"/>
</dbReference>
<dbReference type="InterPro" id="IPR014721">
    <property type="entry name" value="Ribsml_uS5_D2-typ_fold_subgr"/>
</dbReference>
<dbReference type="NCBIfam" id="NF002288">
    <property type="entry name" value="PRK01212.1-4"/>
    <property type="match status" value="1"/>
</dbReference>
<dbReference type="NCBIfam" id="TIGR00191">
    <property type="entry name" value="thrB"/>
    <property type="match status" value="1"/>
</dbReference>
<dbReference type="PANTHER" id="PTHR20861:SF1">
    <property type="entry name" value="HOMOSERINE KINASE"/>
    <property type="match status" value="1"/>
</dbReference>
<dbReference type="PANTHER" id="PTHR20861">
    <property type="entry name" value="HOMOSERINE/4-DIPHOSPHOCYTIDYL-2-C-METHYL-D-ERYTHRITOL KINASE"/>
    <property type="match status" value="1"/>
</dbReference>
<dbReference type="Pfam" id="PF08544">
    <property type="entry name" value="GHMP_kinases_C"/>
    <property type="match status" value="1"/>
</dbReference>
<dbReference type="Pfam" id="PF00288">
    <property type="entry name" value="GHMP_kinases_N"/>
    <property type="match status" value="1"/>
</dbReference>
<dbReference type="PIRSF" id="PIRSF000676">
    <property type="entry name" value="Homoser_kin"/>
    <property type="match status" value="1"/>
</dbReference>
<dbReference type="PRINTS" id="PR00958">
    <property type="entry name" value="HOMSERKINASE"/>
</dbReference>
<dbReference type="SUPFAM" id="SSF55060">
    <property type="entry name" value="GHMP Kinase, C-terminal domain"/>
    <property type="match status" value="1"/>
</dbReference>
<dbReference type="SUPFAM" id="SSF54211">
    <property type="entry name" value="Ribosomal protein S5 domain 2-like"/>
    <property type="match status" value="1"/>
</dbReference>
<dbReference type="PROSITE" id="PS00627">
    <property type="entry name" value="GHMP_KINASES_ATP"/>
    <property type="match status" value="1"/>
</dbReference>
<organism>
    <name type="scientific">Escherichia coli O157:H7 (strain EC4115 / EHEC)</name>
    <dbReference type="NCBI Taxonomy" id="444450"/>
    <lineage>
        <taxon>Bacteria</taxon>
        <taxon>Pseudomonadati</taxon>
        <taxon>Pseudomonadota</taxon>
        <taxon>Gammaproteobacteria</taxon>
        <taxon>Enterobacterales</taxon>
        <taxon>Enterobacteriaceae</taxon>
        <taxon>Escherichia</taxon>
    </lineage>
</organism>